<name>COAA_STRR6</name>
<sequence>MTNEFLHFEKISRQTWQSLHRKTTPPLTEEELESIKSFNDQISLQDVTDIYLPLAHLIQIYKRTKEDLAFSKGIFLQRESKSQPFIIGVSGSVAVGKSTTSRLLQILLSRTFTDATVELVTTDGFLYPNQTLIEQGILNRKGFPESYDMEALLNFLDRIKNGQDVDIPVYSHEVYDIVPEEKQSVKAADFVIVEGINVFQNPQNDRLYITDFFDFSIYVDAGVDDIESWYLDRFLKMLSLAQNDPDSYYYRFTQMPIGEVEAFAHQVWTSINLTNLQNYIEPTRNRAEVILHKSKNHEIDEIYLKK</sequence>
<protein>
    <recommendedName>
        <fullName evidence="1">Pantothenate kinase</fullName>
        <ecNumber evidence="1">2.7.1.33</ecNumber>
    </recommendedName>
    <alternativeName>
        <fullName evidence="1">Pantothenic acid kinase</fullName>
    </alternativeName>
</protein>
<proteinExistence type="inferred from homology"/>
<feature type="chain" id="PRO_0000194455" description="Pantothenate kinase">
    <location>
        <begin position="1"/>
        <end position="306"/>
    </location>
</feature>
<feature type="binding site" evidence="1">
    <location>
        <begin position="91"/>
        <end position="98"/>
    </location>
    <ligand>
        <name>ATP</name>
        <dbReference type="ChEBI" id="CHEBI:30616"/>
    </ligand>
</feature>
<comment type="catalytic activity">
    <reaction evidence="1">
        <text>(R)-pantothenate + ATP = (R)-4'-phosphopantothenate + ADP + H(+)</text>
        <dbReference type="Rhea" id="RHEA:16373"/>
        <dbReference type="ChEBI" id="CHEBI:10986"/>
        <dbReference type="ChEBI" id="CHEBI:15378"/>
        <dbReference type="ChEBI" id="CHEBI:29032"/>
        <dbReference type="ChEBI" id="CHEBI:30616"/>
        <dbReference type="ChEBI" id="CHEBI:456216"/>
        <dbReference type="EC" id="2.7.1.33"/>
    </reaction>
</comment>
<comment type="pathway">
    <text evidence="1">Cofactor biosynthesis; coenzyme A biosynthesis; CoA from (R)-pantothenate: step 1/5.</text>
</comment>
<comment type="subcellular location">
    <subcellularLocation>
        <location evidence="1">Cytoplasm</location>
    </subcellularLocation>
</comment>
<comment type="similarity">
    <text evidence="1">Belongs to the prokaryotic pantothenate kinase family.</text>
</comment>
<comment type="sequence caution" evidence="2">
    <conflict type="erroneous initiation">
        <sequence resource="EMBL-CDS" id="AAK99545"/>
    </conflict>
</comment>
<evidence type="ECO:0000255" key="1">
    <source>
        <dbReference type="HAMAP-Rule" id="MF_00215"/>
    </source>
</evidence>
<evidence type="ECO:0000305" key="2"/>
<reference key="1">
    <citation type="journal article" date="2001" name="J. Bacteriol.">
        <title>Genome of the bacterium Streptococcus pneumoniae strain R6.</title>
        <authorList>
            <person name="Hoskins J."/>
            <person name="Alborn W.E. Jr."/>
            <person name="Arnold J."/>
            <person name="Blaszczak L.C."/>
            <person name="Burgett S."/>
            <person name="DeHoff B.S."/>
            <person name="Estrem S.T."/>
            <person name="Fritz L."/>
            <person name="Fu D.-J."/>
            <person name="Fuller W."/>
            <person name="Geringer C."/>
            <person name="Gilmour R."/>
            <person name="Glass J.S."/>
            <person name="Khoja H."/>
            <person name="Kraft A.R."/>
            <person name="Lagace R.E."/>
            <person name="LeBlanc D.J."/>
            <person name="Lee L.N."/>
            <person name="Lefkowitz E.J."/>
            <person name="Lu J."/>
            <person name="Matsushima P."/>
            <person name="McAhren S.M."/>
            <person name="McHenney M."/>
            <person name="McLeaster K."/>
            <person name="Mundy C.W."/>
            <person name="Nicas T.I."/>
            <person name="Norris F.H."/>
            <person name="O'Gara M."/>
            <person name="Peery R.B."/>
            <person name="Robertson G.T."/>
            <person name="Rockey P."/>
            <person name="Sun P.-M."/>
            <person name="Winkler M.E."/>
            <person name="Yang Y."/>
            <person name="Young-Bellido M."/>
            <person name="Zhao G."/>
            <person name="Zook C.A."/>
            <person name="Baltz R.H."/>
            <person name="Jaskunas S.R."/>
            <person name="Rosteck P.R. Jr."/>
            <person name="Skatrud P.L."/>
            <person name="Glass J.I."/>
        </authorList>
    </citation>
    <scope>NUCLEOTIDE SEQUENCE [LARGE SCALE GENOMIC DNA]</scope>
    <source>
        <strain>ATCC BAA-255 / R6</strain>
    </source>
</reference>
<organism>
    <name type="scientific">Streptococcus pneumoniae (strain ATCC BAA-255 / R6)</name>
    <dbReference type="NCBI Taxonomy" id="171101"/>
    <lineage>
        <taxon>Bacteria</taxon>
        <taxon>Bacillati</taxon>
        <taxon>Bacillota</taxon>
        <taxon>Bacilli</taxon>
        <taxon>Lactobacillales</taxon>
        <taxon>Streptococcaceae</taxon>
        <taxon>Streptococcus</taxon>
    </lineage>
</organism>
<gene>
    <name evidence="1" type="primary">coaA</name>
    <name type="ordered locus">spr0741</name>
</gene>
<accession>Q8DQC7</accession>
<dbReference type="EC" id="2.7.1.33" evidence="1"/>
<dbReference type="EMBL" id="AE007317">
    <property type="protein sequence ID" value="AAK99545.1"/>
    <property type="status" value="ALT_INIT"/>
    <property type="molecule type" value="Genomic_DNA"/>
</dbReference>
<dbReference type="PIR" id="E97964">
    <property type="entry name" value="E97964"/>
</dbReference>
<dbReference type="RefSeq" id="NP_358335.1">
    <property type="nucleotide sequence ID" value="NC_003098.1"/>
</dbReference>
<dbReference type="RefSeq" id="WP_000180485.1">
    <property type="nucleotide sequence ID" value="NC_003098.1"/>
</dbReference>
<dbReference type="SMR" id="Q8DQC7"/>
<dbReference type="STRING" id="171101.spr0741"/>
<dbReference type="GeneID" id="45653803"/>
<dbReference type="KEGG" id="spr:spr0741"/>
<dbReference type="PATRIC" id="fig|171101.6.peg.821"/>
<dbReference type="eggNOG" id="COG1072">
    <property type="taxonomic scope" value="Bacteria"/>
</dbReference>
<dbReference type="HOGENOM" id="CLU_053818_1_1_9"/>
<dbReference type="UniPathway" id="UPA00241">
    <property type="reaction ID" value="UER00352"/>
</dbReference>
<dbReference type="Proteomes" id="UP000000586">
    <property type="component" value="Chromosome"/>
</dbReference>
<dbReference type="GO" id="GO:0005737">
    <property type="term" value="C:cytoplasm"/>
    <property type="evidence" value="ECO:0000318"/>
    <property type="project" value="GO_Central"/>
</dbReference>
<dbReference type="GO" id="GO:0005524">
    <property type="term" value="F:ATP binding"/>
    <property type="evidence" value="ECO:0007669"/>
    <property type="project" value="UniProtKB-UniRule"/>
</dbReference>
<dbReference type="GO" id="GO:0004594">
    <property type="term" value="F:pantothenate kinase activity"/>
    <property type="evidence" value="ECO:0000318"/>
    <property type="project" value="GO_Central"/>
</dbReference>
<dbReference type="GO" id="GO:0015937">
    <property type="term" value="P:coenzyme A biosynthetic process"/>
    <property type="evidence" value="ECO:0000318"/>
    <property type="project" value="GO_Central"/>
</dbReference>
<dbReference type="CDD" id="cd02025">
    <property type="entry name" value="PanK"/>
    <property type="match status" value="1"/>
</dbReference>
<dbReference type="FunFam" id="3.40.50.300:FF:001646">
    <property type="entry name" value="Pantothenate kinase"/>
    <property type="match status" value="1"/>
</dbReference>
<dbReference type="Gene3D" id="3.40.50.300">
    <property type="entry name" value="P-loop containing nucleotide triphosphate hydrolases"/>
    <property type="match status" value="1"/>
</dbReference>
<dbReference type="HAMAP" id="MF_00215">
    <property type="entry name" value="Pantothen_kinase_1"/>
    <property type="match status" value="1"/>
</dbReference>
<dbReference type="InterPro" id="IPR027417">
    <property type="entry name" value="P-loop_NTPase"/>
</dbReference>
<dbReference type="InterPro" id="IPR004566">
    <property type="entry name" value="PanK"/>
</dbReference>
<dbReference type="InterPro" id="IPR006083">
    <property type="entry name" value="PRK/URK"/>
</dbReference>
<dbReference type="NCBIfam" id="TIGR00554">
    <property type="entry name" value="panK_bact"/>
    <property type="match status" value="1"/>
</dbReference>
<dbReference type="PANTHER" id="PTHR10285">
    <property type="entry name" value="URIDINE KINASE"/>
    <property type="match status" value="1"/>
</dbReference>
<dbReference type="Pfam" id="PF00485">
    <property type="entry name" value="PRK"/>
    <property type="match status" value="1"/>
</dbReference>
<dbReference type="PIRSF" id="PIRSF000545">
    <property type="entry name" value="Pantothenate_kin"/>
    <property type="match status" value="1"/>
</dbReference>
<dbReference type="SUPFAM" id="SSF52540">
    <property type="entry name" value="P-loop containing nucleoside triphosphate hydrolases"/>
    <property type="match status" value="1"/>
</dbReference>
<keyword id="KW-0067">ATP-binding</keyword>
<keyword id="KW-0173">Coenzyme A biosynthesis</keyword>
<keyword id="KW-0963">Cytoplasm</keyword>
<keyword id="KW-0418">Kinase</keyword>
<keyword id="KW-0547">Nucleotide-binding</keyword>
<keyword id="KW-1185">Reference proteome</keyword>
<keyword id="KW-0808">Transferase</keyword>